<organism>
    <name type="scientific">Clostridium botulinum (strain Hall / ATCC 3502 / NCTC 13319 / Type A)</name>
    <dbReference type="NCBI Taxonomy" id="441771"/>
    <lineage>
        <taxon>Bacteria</taxon>
        <taxon>Bacillati</taxon>
        <taxon>Bacillota</taxon>
        <taxon>Clostridia</taxon>
        <taxon>Eubacteriales</taxon>
        <taxon>Clostridiaceae</taxon>
        <taxon>Clostridium</taxon>
    </lineage>
</organism>
<feature type="chain" id="PRO_0000393238" description="N(5)-(carboxyethyl)ornithine synthase">
    <location>
        <begin position="1"/>
        <end position="317"/>
    </location>
</feature>
<feature type="binding site" evidence="3">
    <location>
        <position position="15"/>
    </location>
    <ligand>
        <name>pyruvate</name>
        <dbReference type="ChEBI" id="CHEBI:15361"/>
    </ligand>
</feature>
<feature type="binding site" evidence="3">
    <location>
        <position position="71"/>
    </location>
    <ligand>
        <name>pyruvate</name>
        <dbReference type="ChEBI" id="CHEBI:15361"/>
    </ligand>
</feature>
<feature type="binding site" evidence="3">
    <location>
        <position position="92"/>
    </location>
    <ligand>
        <name>pyruvate</name>
        <dbReference type="ChEBI" id="CHEBI:15361"/>
    </ligand>
</feature>
<feature type="binding site" evidence="1">
    <location>
        <begin position="172"/>
        <end position="177"/>
    </location>
    <ligand>
        <name>NADP(+)</name>
        <dbReference type="ChEBI" id="CHEBI:58349"/>
    </ligand>
</feature>
<feature type="mutagenesis site" description="Loss of activity." evidence="2">
    <original>E</original>
    <variation>A</variation>
    <location>
        <position position="13"/>
    </location>
</feature>
<feature type="mutagenesis site" description="Loss of activity." evidence="2">
    <original>R</original>
    <variation>K</variation>
    <location>
        <position position="15"/>
    </location>
</feature>
<feature type="mutagenesis site" description="Loss of activity." evidence="2">
    <original>K</original>
    <variation>R</variation>
    <location>
        <position position="71"/>
    </location>
</feature>
<feature type="mutagenesis site" description="Loss of activity." evidence="2">
    <original>W</original>
    <variation>S</variation>
    <location>
        <position position="90"/>
    </location>
</feature>
<feature type="mutagenesis site" description="Loss of activity." evidence="2">
    <original>H</original>
    <variation>L</variation>
    <location>
        <position position="92"/>
    </location>
</feature>
<feature type="mutagenesis site" description="Loss of activity." evidence="2">
    <original>D</original>
    <variation>A</variation>
    <location>
        <position position="114"/>
    </location>
</feature>
<gene>
    <name type="primary">ceo</name>
    <name type="ordered locus">CBO0515</name>
    <name type="ordered locus">CLC_0588</name>
</gene>
<sequence>MKLGFLIPNHPNEKRVALLPEHVKGFNNELVIETGFGETLGISDAEYVKVGCTIASREEIFKTCEGIFSLKVLKPQDYKHIREGQIIVGWTHPEGSGKIFMEEQGIPKNLIIVDLDNIHPSIYYKDYVIPMEWIPSNFVRKNSYIAGYASTMHAVMNYGSIPTSETKVAILGSGNVSQGAFSAISKFNPDIRMFYRKTMNQLKDELEEFDIIINGIEMDNPNKHILTLEDQMRLKKNCLIIDAAANLGKAIEGARHTTASDPIYNKDGKYYYAVNNSPSIFYRQSSKAISEAFSKHVYSKELEFYLDVIAEVEEMIV</sequence>
<keyword id="KW-0903">Direct protein sequencing</keyword>
<keyword id="KW-0521">NADP</keyword>
<keyword id="KW-0560">Oxidoreductase</keyword>
<keyword id="KW-1185">Reference proteome</keyword>
<comment type="function">
    <text evidence="2">Catalyzes the NADPH-dependent reductive condensation between pyruvic acid and the side chain amino group of L-ornithine to form N(5)-(L-1-carboxyethyl)-L-ornithine. To a lesser extent, can also use L-lysine as substrate (yielding N(6)-(L-1-carboxyethyl)-L-lysine), and the D-isomers of the 2 basic amino acids. Can use alpha-keto acids other than pyruvate, e.g. glyoxylate.</text>
</comment>
<comment type="catalytic activity">
    <reaction evidence="2">
        <text>N(5)-[1(S)-1-carboxyethyl]-L-ornithine + NADP(+) + H2O = L-ornithine + pyruvate + NADPH + H(+)</text>
        <dbReference type="Rhea" id="RHEA:18661"/>
        <dbReference type="ChEBI" id="CHEBI:15361"/>
        <dbReference type="ChEBI" id="CHEBI:15377"/>
        <dbReference type="ChEBI" id="CHEBI:15378"/>
        <dbReference type="ChEBI" id="CHEBI:46911"/>
        <dbReference type="ChEBI" id="CHEBI:57783"/>
        <dbReference type="ChEBI" id="CHEBI:57889"/>
        <dbReference type="ChEBI" id="CHEBI:58349"/>
        <dbReference type="EC" id="1.5.1.24"/>
    </reaction>
</comment>
<comment type="biophysicochemical properties">
    <kinetics>
        <KM evidence="2">0.15 mM for pyruvate</KM>
        <KM evidence="2">29.5 mM for L-ornithine</KM>
        <KM evidence="2">2.95 uM for NADPH</KM>
        <Vmax evidence="2">22.4 umol/min/mg enzyme</Vmax>
    </kinetics>
</comment>
<comment type="subunit">
    <text evidence="4">Homotetramer.</text>
</comment>
<comment type="similarity">
    <text evidence="3">Belongs to the AlaDH/PNT family. CEOS subfamily.</text>
</comment>
<dbReference type="EC" id="1.5.1.24"/>
<dbReference type="EMBL" id="CP000727">
    <property type="protein sequence ID" value="ABS38175.1"/>
    <property type="molecule type" value="Genomic_DNA"/>
</dbReference>
<dbReference type="EMBL" id="AM412317">
    <property type="protein sequence ID" value="CAL82068.1"/>
    <property type="molecule type" value="Genomic_DNA"/>
</dbReference>
<dbReference type="RefSeq" id="WP_011948261.1">
    <property type="nucleotide sequence ID" value="NC_009698.1"/>
</dbReference>
<dbReference type="RefSeq" id="YP_001253058.1">
    <property type="nucleotide sequence ID" value="NC_009495.1"/>
</dbReference>
<dbReference type="RefSeq" id="YP_001386471.1">
    <property type="nucleotide sequence ID" value="NC_009698.1"/>
</dbReference>
<dbReference type="SMR" id="A5HZ59"/>
<dbReference type="GeneID" id="5184770"/>
<dbReference type="KEGG" id="cbh:CLC_0588"/>
<dbReference type="KEGG" id="cbo:CBO0515"/>
<dbReference type="PATRIC" id="fig|413999.7.peg.517"/>
<dbReference type="HOGENOM" id="CLU_055768_0_0_9"/>
<dbReference type="SABIO-RK" id="A5HZ59"/>
<dbReference type="PRO" id="PR:A5HZ59"/>
<dbReference type="Proteomes" id="UP000001986">
    <property type="component" value="Chromosome"/>
</dbReference>
<dbReference type="GO" id="GO:0047126">
    <property type="term" value="F:N5-(carboxyethyl)ornithine synthase activity"/>
    <property type="evidence" value="ECO:0000314"/>
    <property type="project" value="UniProtKB"/>
</dbReference>
<dbReference type="GO" id="GO:0006591">
    <property type="term" value="P:ornithine metabolic process"/>
    <property type="evidence" value="ECO:0000314"/>
    <property type="project" value="UniProtKB"/>
</dbReference>
<dbReference type="CDD" id="cd12181">
    <property type="entry name" value="ceo_syn"/>
    <property type="match status" value="1"/>
</dbReference>
<dbReference type="FunFam" id="3.40.50.720:FF:000489">
    <property type="entry name" value="N(5)-(Carboxyethyl)ornithine synthase"/>
    <property type="match status" value="1"/>
</dbReference>
<dbReference type="FunFam" id="3.40.50.720:FF:000488">
    <property type="entry name" value="N5-(Carboxyethyl)ornithine synthase"/>
    <property type="match status" value="1"/>
</dbReference>
<dbReference type="Gene3D" id="3.40.50.720">
    <property type="entry name" value="NAD(P)-binding Rossmann-like Domain"/>
    <property type="match status" value="3"/>
</dbReference>
<dbReference type="InterPro" id="IPR007886">
    <property type="entry name" value="AlaDH/PNT_N"/>
</dbReference>
<dbReference type="InterPro" id="IPR007698">
    <property type="entry name" value="AlaDH/PNT_NAD(H)-bd"/>
</dbReference>
<dbReference type="InterPro" id="IPR046951">
    <property type="entry name" value="CEOS"/>
</dbReference>
<dbReference type="InterPro" id="IPR036291">
    <property type="entry name" value="NAD(P)-bd_dom_sf"/>
</dbReference>
<dbReference type="PANTHER" id="PTHR42795">
    <property type="entry name" value="ALANINE DEHYDROGENASE"/>
    <property type="match status" value="1"/>
</dbReference>
<dbReference type="PANTHER" id="PTHR42795:SF1">
    <property type="entry name" value="ALANINE DEHYDROGENASE"/>
    <property type="match status" value="1"/>
</dbReference>
<dbReference type="Pfam" id="PF01262">
    <property type="entry name" value="AlaDh_PNT_C"/>
    <property type="match status" value="1"/>
</dbReference>
<dbReference type="Pfam" id="PF05222">
    <property type="entry name" value="AlaDh_PNT_N"/>
    <property type="match status" value="1"/>
</dbReference>
<dbReference type="SMART" id="SM01002">
    <property type="entry name" value="AlaDh_PNT_C"/>
    <property type="match status" value="1"/>
</dbReference>
<dbReference type="SMART" id="SM01003">
    <property type="entry name" value="AlaDh_PNT_N"/>
    <property type="match status" value="1"/>
</dbReference>
<dbReference type="SUPFAM" id="SSF52283">
    <property type="entry name" value="Formate/glycerate dehydrogenase catalytic domain-like"/>
    <property type="match status" value="1"/>
</dbReference>
<dbReference type="SUPFAM" id="SSF51735">
    <property type="entry name" value="NAD(P)-binding Rossmann-fold domains"/>
    <property type="match status" value="1"/>
</dbReference>
<protein>
    <recommendedName>
        <fullName>N(5)-(carboxyethyl)ornithine synthase</fullName>
        <shortName>CEOS</shortName>
        <ecNumber>1.5.1.24</ecNumber>
    </recommendedName>
    <alternativeName>
        <fullName>N(5)-(L-1-carboxyethyl)-L-ornithine:NADP(+) oxidoreductase</fullName>
    </alternativeName>
</protein>
<accession>A5HZ59</accession>
<accession>A7FZS5</accession>
<proteinExistence type="evidence at protein level"/>
<evidence type="ECO:0000255" key="1"/>
<evidence type="ECO:0000269" key="2">
    <source>
    </source>
</evidence>
<evidence type="ECO:0000305" key="3"/>
<evidence type="ECO:0000305" key="4">
    <source>
    </source>
</evidence>
<name>CEO_CLOBH</name>
<reference key="1">
    <citation type="journal article" date="2007" name="Genome Res.">
        <title>Genome sequence of a proteolytic (Group I) Clostridium botulinum strain Hall A and comparative analysis of the clostridial genomes.</title>
        <authorList>
            <person name="Sebaihia M."/>
            <person name="Peck M.W."/>
            <person name="Minton N.P."/>
            <person name="Thomson N.R."/>
            <person name="Holden M.T.G."/>
            <person name="Mitchell W.J."/>
            <person name="Carter A.T."/>
            <person name="Bentley S.D."/>
            <person name="Mason D.R."/>
            <person name="Crossman L."/>
            <person name="Paul C.J."/>
            <person name="Ivens A."/>
            <person name="Wells-Bennik M.H.J."/>
            <person name="Davis I.J."/>
            <person name="Cerdeno-Tarraga A.M."/>
            <person name="Churcher C."/>
            <person name="Quail M.A."/>
            <person name="Chillingworth T."/>
            <person name="Feltwell T."/>
            <person name="Fraser A."/>
            <person name="Goodhead I."/>
            <person name="Hance Z."/>
            <person name="Jagels K."/>
            <person name="Larke N."/>
            <person name="Maddison M."/>
            <person name="Moule S."/>
            <person name="Mungall K."/>
            <person name="Norbertczak H."/>
            <person name="Rabbinowitsch E."/>
            <person name="Sanders M."/>
            <person name="Simmonds M."/>
            <person name="White B."/>
            <person name="Whithead S."/>
            <person name="Parkhill J."/>
        </authorList>
    </citation>
    <scope>NUCLEOTIDE SEQUENCE [LARGE SCALE GENOMIC DNA]</scope>
    <source>
        <strain>Hall / ATCC 3502 / NCTC 13319 / Type A</strain>
    </source>
</reference>
<reference key="2">
    <citation type="journal article" date="2007" name="PLoS ONE">
        <title>Analysis of the neurotoxin complex genes in Clostridium botulinum A1-A4 and B1 strains: BoNT/A3, /Ba4 and /B1 clusters are located within plasmids.</title>
        <authorList>
            <person name="Smith T.J."/>
            <person name="Hill K.K."/>
            <person name="Foley B.T."/>
            <person name="Detter J.C."/>
            <person name="Munk A.C."/>
            <person name="Bruce D.C."/>
            <person name="Doggett N.A."/>
            <person name="Smith L.A."/>
            <person name="Marks J.D."/>
            <person name="Xie G."/>
            <person name="Brettin T.S."/>
        </authorList>
    </citation>
    <scope>NUCLEOTIDE SEQUENCE [LARGE SCALE GENOMIC DNA]</scope>
    <source>
        <strain>Hall / ATCC 3502 / NCTC 13319 / Type A</strain>
    </source>
</reference>
<reference key="3">
    <citation type="journal article" date="2010" name="J. Bacteriol.">
        <title>The gene CBO0515 from Clostridium botulinum strain Hall A encodes the rare enzyme N5-(carboxyethyl) ornithine synthase, EC 1.5.1.24.</title>
        <authorList>
            <person name="Thompson J."/>
            <person name="Hill K.K."/>
            <person name="Smith T.J."/>
            <person name="Pikis A."/>
        </authorList>
    </citation>
    <scope>PROTEIN SEQUENCE OF 1-28</scope>
    <scope>FUNCTION</scope>
    <scope>CATALYTIC ACTIVITY</scope>
    <scope>KINETIC PARAMETERS</scope>
    <scope>SUBSTRATE SPECIFICITY</scope>
    <scope>IDENTIFICATION BY MASS SPECTROMETRY</scope>
    <scope>SUBUNIT</scope>
    <scope>MUTAGENESIS OF GLU-13; ARG-15; LYS-71; TRP-90; HIS-92 AND ASP-114</scope>
    <scope>PYRUVATE BINDING SITE</scope>
    <source>
        <strain>Hall / ATCC 3502 / NCTC 13319 / Type A</strain>
    </source>
</reference>